<protein>
    <recommendedName>
        <fullName evidence="3">Peruvianin-1</fullName>
        <ecNumber evidence="1">3.4.22.-</ecNumber>
    </recommendedName>
    <alternativeName>
        <fullName evidence="2">Peruvianin-I</fullName>
    </alternativeName>
</protein>
<organism>
    <name type="scientific">Thevetia peruviana</name>
    <name type="common">Yellow oleander</name>
    <name type="synonym">Cascabela thevetia</name>
    <dbReference type="NCBI Taxonomy" id="52862"/>
    <lineage>
        <taxon>Eukaryota</taxon>
        <taxon>Viridiplantae</taxon>
        <taxon>Streptophyta</taxon>
        <taxon>Embryophyta</taxon>
        <taxon>Tracheophyta</taxon>
        <taxon>Spermatophyta</taxon>
        <taxon>Magnoliopsida</taxon>
        <taxon>eudicotyledons</taxon>
        <taxon>Gunneridae</taxon>
        <taxon>Pentapetalae</taxon>
        <taxon>asterids</taxon>
        <taxon>lamiids</taxon>
        <taxon>Gentianales</taxon>
        <taxon>Apocynaceae</taxon>
        <taxon>Rauvolfioideae</taxon>
        <taxon>Plumerieae</taxon>
        <taxon>Thevetiinae</taxon>
        <taxon>Thevetia</taxon>
    </lineage>
</organism>
<proteinExistence type="evidence at protein level"/>
<feature type="chain" id="PRO_0000435962" description="Peruvianin-1" evidence="1">
    <location>
        <begin position="1"/>
        <end position="36" status="greater than"/>
    </location>
</feature>
<feature type="non-terminal residue" evidence="2">
    <location>
        <position position="36"/>
    </location>
</feature>
<keyword id="KW-0903">Direct protein sequencing</keyword>
<keyword id="KW-0378">Hydrolase</keyword>
<keyword id="KW-0645">Protease</keyword>
<keyword id="KW-0788">Thiol protease</keyword>
<evidence type="ECO:0000269" key="1">
    <source>
    </source>
</evidence>
<evidence type="ECO:0000303" key="2">
    <source>
    </source>
</evidence>
<evidence type="ECO:0000305" key="3"/>
<comment type="function">
    <text evidence="1">Cysteine protease able to degrade azocasein and benzoyl-arginine-beta-naphtylamide (BANA) in vitro.</text>
</comment>
<comment type="activity regulation">
    <text evidence="1">Inhibited by iodoacetamide and trans-epoxysuccinyl-L-leucylamido(4-guanidino)butane (E-64) but not by phenylmethylsulfonyl fluoride (PMSF), pepstatin-A, ethylenediamine tetra acetic acid (EDTA) or ethylene glycol tetraacetic acid (EGTA).</text>
</comment>
<comment type="biophysicochemical properties">
    <kinetics>
        <KM evidence="1">17.6 uM for azocasein (at pH 6 and 37 degrees Celsius)</KM>
        <Vmax evidence="1">46.0 nmol/sec/ug enzyme toward azocasein (at pH 6 and 37 degrees Celsius)</Vmax>
    </kinetics>
    <phDependence>
        <text evidence="1">Optimum pH is 5-6.</text>
    </phDependence>
    <temperatureDependence>
        <text evidence="1">Optimum temperature is 25-37 degrees Celsius.</text>
    </temperatureDependence>
</comment>
<comment type="subunit">
    <text evidence="1">Homohexamer, possibly consisting of a trimer of dimers.</text>
</comment>
<comment type="PTM">
    <text evidence="1">Glycosylated.</text>
</comment>
<comment type="mass spectrometry">
    <text>Monomer.</text>
</comment>
<comment type="similarity">
    <text evidence="3">Belongs to the germin family.</text>
</comment>
<accession>C0HJY2</accession>
<name>PRVN_THEPV</name>
<sequence>ADPGPLQDFCLADLNSPLFINGYPCRNPALAISDDF</sequence>
<reference evidence="3" key="1">
    <citation type="journal article" date="2016" name="Planta">
        <title>Proteomic analysis and purification of an unusual germin-like protein with proteolytic activity in the latex of Thevetia peruviana.</title>
        <authorList>
            <person name="de Freitas C.D."/>
            <person name="da Cruz W.T."/>
            <person name="Silva M.Z."/>
            <person name="Vasconcelos I.M."/>
            <person name="Moreno F.B."/>
            <person name="Moreira R.A."/>
            <person name="Monteiro-Moreira A.C."/>
            <person name="Alencar L.M."/>
            <person name="Sousa J.S."/>
            <person name="Rocha B.A."/>
            <person name="Ramos M.V."/>
        </authorList>
    </citation>
    <scope>PROTEIN SEQUENCE</scope>
    <scope>FUNCTION</scope>
    <scope>ACTIVITY REGULATION</scope>
    <scope>BIOPHYSICOCHEMICAL PROPERTIES</scope>
    <scope>SUBUNIT</scope>
    <scope>GLYCOSYLATION</scope>
    <scope>MASS SPECTROMETRY</scope>
    <source>
        <tissue evidence="2">Latex</tissue>
    </source>
</reference>
<dbReference type="EC" id="3.4.22.-" evidence="1"/>
<dbReference type="SMR" id="C0HJY2"/>
<dbReference type="SABIO-RK" id="C0HJY2"/>
<dbReference type="GO" id="GO:0008234">
    <property type="term" value="F:cysteine-type peptidase activity"/>
    <property type="evidence" value="ECO:0007669"/>
    <property type="project" value="UniProtKB-KW"/>
</dbReference>
<dbReference type="GO" id="GO:0006508">
    <property type="term" value="P:proteolysis"/>
    <property type="evidence" value="ECO:0007669"/>
    <property type="project" value="UniProtKB-KW"/>
</dbReference>
<dbReference type="Gene3D" id="2.60.120.10">
    <property type="entry name" value="Jelly Rolls"/>
    <property type="match status" value="1"/>
</dbReference>
<dbReference type="InterPro" id="IPR014710">
    <property type="entry name" value="RmlC-like_jellyroll"/>
</dbReference>